<keyword id="KW-0032">Aminotransferase</keyword>
<keyword id="KW-0963">Cytoplasm</keyword>
<keyword id="KW-0315">Glutamine amidotransferase</keyword>
<keyword id="KW-1185">Reference proteome</keyword>
<keyword id="KW-0677">Repeat</keyword>
<keyword id="KW-0808">Transferase</keyword>
<dbReference type="EC" id="2.6.1.16" evidence="1"/>
<dbReference type="EMBL" id="AE005174">
    <property type="protein sequence ID" value="AAG58932.1"/>
    <property type="molecule type" value="Genomic_DNA"/>
</dbReference>
<dbReference type="EMBL" id="BA000007">
    <property type="protein sequence ID" value="BAB38094.1"/>
    <property type="molecule type" value="Genomic_DNA"/>
</dbReference>
<dbReference type="PIR" id="G91212">
    <property type="entry name" value="G91212"/>
</dbReference>
<dbReference type="PIR" id="H86058">
    <property type="entry name" value="H86058"/>
</dbReference>
<dbReference type="RefSeq" id="NP_312698.1">
    <property type="nucleotide sequence ID" value="NC_002695.1"/>
</dbReference>
<dbReference type="RefSeq" id="WP_000334100.1">
    <property type="nucleotide sequence ID" value="NZ_VOAI01000011.1"/>
</dbReference>
<dbReference type="SMR" id="Q8XEG2"/>
<dbReference type="STRING" id="155864.Z5227"/>
<dbReference type="MEROPS" id="C44.971"/>
<dbReference type="GeneID" id="915347"/>
<dbReference type="KEGG" id="ece:Z5227"/>
<dbReference type="KEGG" id="ecs:ECs_4671"/>
<dbReference type="PATRIC" id="fig|386585.9.peg.4876"/>
<dbReference type="eggNOG" id="COG0449">
    <property type="taxonomic scope" value="Bacteria"/>
</dbReference>
<dbReference type="HOGENOM" id="CLU_012520_5_2_6"/>
<dbReference type="OMA" id="ASEYRYA"/>
<dbReference type="Proteomes" id="UP000000558">
    <property type="component" value="Chromosome"/>
</dbReference>
<dbReference type="Proteomes" id="UP000002519">
    <property type="component" value="Chromosome"/>
</dbReference>
<dbReference type="GO" id="GO:0005829">
    <property type="term" value="C:cytosol"/>
    <property type="evidence" value="ECO:0007669"/>
    <property type="project" value="TreeGrafter"/>
</dbReference>
<dbReference type="GO" id="GO:0097367">
    <property type="term" value="F:carbohydrate derivative binding"/>
    <property type="evidence" value="ECO:0007669"/>
    <property type="project" value="InterPro"/>
</dbReference>
<dbReference type="GO" id="GO:0004360">
    <property type="term" value="F:glutamine-fructose-6-phosphate transaminase (isomerizing) activity"/>
    <property type="evidence" value="ECO:0007669"/>
    <property type="project" value="UniProtKB-UniRule"/>
</dbReference>
<dbReference type="GO" id="GO:0005975">
    <property type="term" value="P:carbohydrate metabolic process"/>
    <property type="evidence" value="ECO:0007669"/>
    <property type="project" value="UniProtKB-UniRule"/>
</dbReference>
<dbReference type="GO" id="GO:0006002">
    <property type="term" value="P:fructose 6-phosphate metabolic process"/>
    <property type="evidence" value="ECO:0007669"/>
    <property type="project" value="TreeGrafter"/>
</dbReference>
<dbReference type="GO" id="GO:0006487">
    <property type="term" value="P:protein N-linked glycosylation"/>
    <property type="evidence" value="ECO:0007669"/>
    <property type="project" value="TreeGrafter"/>
</dbReference>
<dbReference type="GO" id="GO:0006047">
    <property type="term" value="P:UDP-N-acetylglucosamine metabolic process"/>
    <property type="evidence" value="ECO:0007669"/>
    <property type="project" value="TreeGrafter"/>
</dbReference>
<dbReference type="CDD" id="cd00714">
    <property type="entry name" value="GFAT"/>
    <property type="match status" value="1"/>
</dbReference>
<dbReference type="CDD" id="cd05008">
    <property type="entry name" value="SIS_GlmS_GlmD_1"/>
    <property type="match status" value="1"/>
</dbReference>
<dbReference type="CDD" id="cd05009">
    <property type="entry name" value="SIS_GlmS_GlmD_2"/>
    <property type="match status" value="1"/>
</dbReference>
<dbReference type="FunFam" id="3.40.50.10490:FF:000001">
    <property type="entry name" value="Glutamine--fructose-6-phosphate aminotransferase [isomerizing]"/>
    <property type="match status" value="1"/>
</dbReference>
<dbReference type="FunFam" id="3.40.50.10490:FF:000002">
    <property type="entry name" value="Glutamine--fructose-6-phosphate aminotransferase [isomerizing]"/>
    <property type="match status" value="1"/>
</dbReference>
<dbReference type="FunFam" id="3.60.20.10:FF:000006">
    <property type="entry name" value="Glutamine--fructose-6-phosphate aminotransferase [isomerizing]"/>
    <property type="match status" value="1"/>
</dbReference>
<dbReference type="Gene3D" id="3.40.50.10490">
    <property type="entry name" value="Glucose-6-phosphate isomerase like protein, domain 1"/>
    <property type="match status" value="2"/>
</dbReference>
<dbReference type="Gene3D" id="3.60.20.10">
    <property type="entry name" value="Glutamine Phosphoribosylpyrophosphate, subunit 1, domain 1"/>
    <property type="match status" value="1"/>
</dbReference>
<dbReference type="HAMAP" id="MF_00164">
    <property type="entry name" value="GlmS"/>
    <property type="match status" value="1"/>
</dbReference>
<dbReference type="InterPro" id="IPR017932">
    <property type="entry name" value="GATase_2_dom"/>
</dbReference>
<dbReference type="InterPro" id="IPR005855">
    <property type="entry name" value="GFAT"/>
</dbReference>
<dbReference type="InterPro" id="IPR047084">
    <property type="entry name" value="GFAT_N"/>
</dbReference>
<dbReference type="InterPro" id="IPR035466">
    <property type="entry name" value="GlmS/AgaS_SIS"/>
</dbReference>
<dbReference type="InterPro" id="IPR035490">
    <property type="entry name" value="GlmS/FrlB_SIS"/>
</dbReference>
<dbReference type="InterPro" id="IPR029055">
    <property type="entry name" value="Ntn_hydrolases_N"/>
</dbReference>
<dbReference type="InterPro" id="IPR001347">
    <property type="entry name" value="SIS_dom"/>
</dbReference>
<dbReference type="InterPro" id="IPR046348">
    <property type="entry name" value="SIS_dom_sf"/>
</dbReference>
<dbReference type="NCBIfam" id="TIGR01135">
    <property type="entry name" value="glmS"/>
    <property type="match status" value="1"/>
</dbReference>
<dbReference type="NCBIfam" id="NF001484">
    <property type="entry name" value="PRK00331.1"/>
    <property type="match status" value="1"/>
</dbReference>
<dbReference type="PANTHER" id="PTHR10937">
    <property type="entry name" value="GLUCOSAMINE--FRUCTOSE-6-PHOSPHATE AMINOTRANSFERASE, ISOMERIZING"/>
    <property type="match status" value="1"/>
</dbReference>
<dbReference type="PANTHER" id="PTHR10937:SF0">
    <property type="entry name" value="GLUTAMINE--FRUCTOSE-6-PHOSPHATE TRANSAMINASE (ISOMERIZING)"/>
    <property type="match status" value="1"/>
</dbReference>
<dbReference type="Pfam" id="PF13522">
    <property type="entry name" value="GATase_6"/>
    <property type="match status" value="1"/>
</dbReference>
<dbReference type="Pfam" id="PF01380">
    <property type="entry name" value="SIS"/>
    <property type="match status" value="2"/>
</dbReference>
<dbReference type="SUPFAM" id="SSF56235">
    <property type="entry name" value="N-terminal nucleophile aminohydrolases (Ntn hydrolases)"/>
    <property type="match status" value="1"/>
</dbReference>
<dbReference type="SUPFAM" id="SSF53697">
    <property type="entry name" value="SIS domain"/>
    <property type="match status" value="1"/>
</dbReference>
<dbReference type="PROSITE" id="PS51278">
    <property type="entry name" value="GATASE_TYPE_2"/>
    <property type="match status" value="1"/>
</dbReference>
<dbReference type="PROSITE" id="PS51464">
    <property type="entry name" value="SIS"/>
    <property type="match status" value="2"/>
</dbReference>
<gene>
    <name evidence="1" type="primary">glmS</name>
    <name type="ordered locus">Z5227</name>
    <name type="ordered locus">ECs4671</name>
</gene>
<name>GLMS_ECO57</name>
<accession>Q8XEG2</accession>
<reference key="1">
    <citation type="journal article" date="2001" name="Nature">
        <title>Genome sequence of enterohaemorrhagic Escherichia coli O157:H7.</title>
        <authorList>
            <person name="Perna N.T."/>
            <person name="Plunkett G. III"/>
            <person name="Burland V."/>
            <person name="Mau B."/>
            <person name="Glasner J.D."/>
            <person name="Rose D.J."/>
            <person name="Mayhew G.F."/>
            <person name="Evans P.S."/>
            <person name="Gregor J."/>
            <person name="Kirkpatrick H.A."/>
            <person name="Posfai G."/>
            <person name="Hackett J."/>
            <person name="Klink S."/>
            <person name="Boutin A."/>
            <person name="Shao Y."/>
            <person name="Miller L."/>
            <person name="Grotbeck E.J."/>
            <person name="Davis N.W."/>
            <person name="Lim A."/>
            <person name="Dimalanta E.T."/>
            <person name="Potamousis K."/>
            <person name="Apodaca J."/>
            <person name="Anantharaman T.S."/>
            <person name="Lin J."/>
            <person name="Yen G."/>
            <person name="Schwartz D.C."/>
            <person name="Welch R.A."/>
            <person name="Blattner F.R."/>
        </authorList>
    </citation>
    <scope>NUCLEOTIDE SEQUENCE [LARGE SCALE GENOMIC DNA]</scope>
    <source>
        <strain>O157:H7 / EDL933 / ATCC 700927 / EHEC</strain>
    </source>
</reference>
<reference key="2">
    <citation type="journal article" date="2001" name="DNA Res.">
        <title>Complete genome sequence of enterohemorrhagic Escherichia coli O157:H7 and genomic comparison with a laboratory strain K-12.</title>
        <authorList>
            <person name="Hayashi T."/>
            <person name="Makino K."/>
            <person name="Ohnishi M."/>
            <person name="Kurokawa K."/>
            <person name="Ishii K."/>
            <person name="Yokoyama K."/>
            <person name="Han C.-G."/>
            <person name="Ohtsubo E."/>
            <person name="Nakayama K."/>
            <person name="Murata T."/>
            <person name="Tanaka M."/>
            <person name="Tobe T."/>
            <person name="Iida T."/>
            <person name="Takami H."/>
            <person name="Honda T."/>
            <person name="Sasakawa C."/>
            <person name="Ogasawara N."/>
            <person name="Yasunaga T."/>
            <person name="Kuhara S."/>
            <person name="Shiba T."/>
            <person name="Hattori M."/>
            <person name="Shinagawa H."/>
        </authorList>
    </citation>
    <scope>NUCLEOTIDE SEQUENCE [LARGE SCALE GENOMIC DNA]</scope>
    <source>
        <strain>O157:H7 / Sakai / RIMD 0509952 / EHEC</strain>
    </source>
</reference>
<feature type="initiator methionine" description="Removed" evidence="1">
    <location>
        <position position="1"/>
    </location>
</feature>
<feature type="chain" id="PRO_0000135330" description="Glutamine--fructose-6-phosphate aminotransferase [isomerizing]">
    <location>
        <begin position="2"/>
        <end position="609"/>
    </location>
</feature>
<feature type="domain" description="Glutamine amidotransferase type-2" evidence="1">
    <location>
        <begin position="2"/>
        <end position="218"/>
    </location>
</feature>
<feature type="domain" description="SIS 1" evidence="1">
    <location>
        <begin position="286"/>
        <end position="426"/>
    </location>
</feature>
<feature type="domain" description="SIS 2" evidence="1">
    <location>
        <begin position="458"/>
        <end position="599"/>
    </location>
</feature>
<feature type="active site" description="Nucleophile; for GATase activity" evidence="1">
    <location>
        <position position="2"/>
    </location>
</feature>
<feature type="active site" description="For Fru-6P isomerization activity" evidence="1">
    <location>
        <position position="604"/>
    </location>
</feature>
<feature type="sequence conflict" description="In Ref. 2; BAB38094." evidence="2" ref="2">
    <original>H</original>
    <variation>N</variation>
    <location>
        <position position="567"/>
    </location>
</feature>
<organism>
    <name type="scientific">Escherichia coli O157:H7</name>
    <dbReference type="NCBI Taxonomy" id="83334"/>
    <lineage>
        <taxon>Bacteria</taxon>
        <taxon>Pseudomonadati</taxon>
        <taxon>Pseudomonadota</taxon>
        <taxon>Gammaproteobacteria</taxon>
        <taxon>Enterobacterales</taxon>
        <taxon>Enterobacteriaceae</taxon>
        <taxon>Escherichia</taxon>
    </lineage>
</organism>
<comment type="function">
    <text evidence="1">Catalyzes the first step in hexosamine metabolism, converting fructose-6P into glucosamine-6P using glutamine as a nitrogen source.</text>
</comment>
<comment type="catalytic activity">
    <reaction evidence="1">
        <text>D-fructose 6-phosphate + L-glutamine = D-glucosamine 6-phosphate + L-glutamate</text>
        <dbReference type="Rhea" id="RHEA:13237"/>
        <dbReference type="ChEBI" id="CHEBI:29985"/>
        <dbReference type="ChEBI" id="CHEBI:58359"/>
        <dbReference type="ChEBI" id="CHEBI:58725"/>
        <dbReference type="ChEBI" id="CHEBI:61527"/>
        <dbReference type="EC" id="2.6.1.16"/>
    </reaction>
</comment>
<comment type="subunit">
    <text evidence="1">Homodimer.</text>
</comment>
<comment type="subcellular location">
    <subcellularLocation>
        <location evidence="1">Cytoplasm</location>
    </subcellularLocation>
</comment>
<evidence type="ECO:0000255" key="1">
    <source>
        <dbReference type="HAMAP-Rule" id="MF_00164"/>
    </source>
</evidence>
<evidence type="ECO:0000305" key="2"/>
<protein>
    <recommendedName>
        <fullName evidence="1">Glutamine--fructose-6-phosphate aminotransferase [isomerizing]</fullName>
        <ecNumber evidence="1">2.6.1.16</ecNumber>
    </recommendedName>
    <alternativeName>
        <fullName evidence="1">D-fructose-6-phosphate amidotransferase</fullName>
    </alternativeName>
    <alternativeName>
        <fullName evidence="1">GFAT</fullName>
    </alternativeName>
    <alternativeName>
        <fullName evidence="1">Glucosamine-6-phosphate synthase</fullName>
    </alternativeName>
    <alternativeName>
        <fullName evidence="1">Hexosephosphate aminotransferase</fullName>
    </alternativeName>
    <alternativeName>
        <fullName evidence="1">L-glutamine--D-fructose-6-phosphate amidotransferase</fullName>
    </alternativeName>
</protein>
<sequence>MCGIVGAIAQRDVAEILLEGLRRLEYRGYDSAGLAVVDAEGHMTRLRRLGKVQMLAQAAEEHPLHGGTGIAHTRWATHGEPSEVNAHPHVSEHIVVVHNGIIENHEPLREELKARGYTFVSETDTEVIAHLVNWELKQGGTLREAVLRAIPQLRGAYGTVIMDSRHPDTLLAARSGSPLVIGLGMGENFIASDQLALLPVTRRFIFLEEGDIAEITRRSVNIFDKTGAEVKRQDIESNLQYDAGDKGIYRHYMQKEIYEQPNAIKNTLTGRISHGQVDLSELGPNADELLSKVEHIQILACGTSYNSGMVSRYWFESLAGIPCDVEIASEFRYRKSAVRRNSLMITLSQSGETADTLAGLRLSKELGYLGSLAICNVPGSSLVRESDLALMTNAGTEIGVASTKAFTTQLTVLLMLVAKLSRLKGLDASIEHDIVHGLQALPSRIEQMLSQDKRIEALAEDFSDKHHALFLGRGDQYPIALEGALKLKEISYIHAEAYAAGELKHGPLALIDADMPVIVVAPNNELLEKLKSNIEEVRARGGQLYVFAEQDAGFVSSDNMHIIEMPHVEEVIAPIFYTVPLQLLAYHVALIKGTDVDQPRNLAKSVTVE</sequence>
<proteinExistence type="inferred from homology"/>